<gene>
    <name evidence="1" type="primary">psd</name>
    <name type="ordered locus">BCAH187_A4471</name>
</gene>
<keyword id="KW-1003">Cell membrane</keyword>
<keyword id="KW-0210">Decarboxylase</keyword>
<keyword id="KW-0444">Lipid biosynthesis</keyword>
<keyword id="KW-0443">Lipid metabolism</keyword>
<keyword id="KW-0456">Lyase</keyword>
<keyword id="KW-0472">Membrane</keyword>
<keyword id="KW-0594">Phospholipid biosynthesis</keyword>
<keyword id="KW-1208">Phospholipid metabolism</keyword>
<keyword id="KW-0670">Pyruvate</keyword>
<keyword id="KW-0865">Zymogen</keyword>
<name>PSD_BACC7</name>
<proteinExistence type="inferred from homology"/>
<accession>B7HPN7</accession>
<dbReference type="EC" id="4.1.1.65" evidence="1"/>
<dbReference type="EMBL" id="CP001177">
    <property type="protein sequence ID" value="ACJ81767.1"/>
    <property type="molecule type" value="Genomic_DNA"/>
</dbReference>
<dbReference type="SMR" id="B7HPN7"/>
<dbReference type="KEGG" id="bcr:BCAH187_A4471"/>
<dbReference type="HOGENOM" id="CLU_029061_4_0_9"/>
<dbReference type="UniPathway" id="UPA00558">
    <property type="reaction ID" value="UER00616"/>
</dbReference>
<dbReference type="Proteomes" id="UP000002214">
    <property type="component" value="Chromosome"/>
</dbReference>
<dbReference type="GO" id="GO:0005886">
    <property type="term" value="C:plasma membrane"/>
    <property type="evidence" value="ECO:0007669"/>
    <property type="project" value="UniProtKB-SubCell"/>
</dbReference>
<dbReference type="GO" id="GO:0004609">
    <property type="term" value="F:phosphatidylserine decarboxylase activity"/>
    <property type="evidence" value="ECO:0007669"/>
    <property type="project" value="UniProtKB-UniRule"/>
</dbReference>
<dbReference type="GO" id="GO:0006646">
    <property type="term" value="P:phosphatidylethanolamine biosynthetic process"/>
    <property type="evidence" value="ECO:0007669"/>
    <property type="project" value="UniProtKB-UniRule"/>
</dbReference>
<dbReference type="HAMAP" id="MF_00662">
    <property type="entry name" value="PS_decarb_PSD_B_type1"/>
    <property type="match status" value="1"/>
</dbReference>
<dbReference type="InterPro" id="IPR003817">
    <property type="entry name" value="PS_Dcarbxylase"/>
</dbReference>
<dbReference type="InterPro" id="IPR033177">
    <property type="entry name" value="PSD-B"/>
</dbReference>
<dbReference type="InterPro" id="IPR033178">
    <property type="entry name" value="PSD_type1_pro"/>
</dbReference>
<dbReference type="NCBIfam" id="NF002853">
    <property type="entry name" value="PRK03140.1"/>
    <property type="match status" value="1"/>
</dbReference>
<dbReference type="NCBIfam" id="TIGR00163">
    <property type="entry name" value="PS_decarb"/>
    <property type="match status" value="1"/>
</dbReference>
<dbReference type="PANTHER" id="PTHR10067">
    <property type="entry name" value="PHOSPHATIDYLSERINE DECARBOXYLASE"/>
    <property type="match status" value="1"/>
</dbReference>
<dbReference type="PANTHER" id="PTHR10067:SF6">
    <property type="entry name" value="PHOSPHATIDYLSERINE DECARBOXYLASE PROENZYME, MITOCHONDRIAL"/>
    <property type="match status" value="1"/>
</dbReference>
<dbReference type="Pfam" id="PF02666">
    <property type="entry name" value="PS_Dcarbxylase"/>
    <property type="match status" value="1"/>
</dbReference>
<feature type="chain" id="PRO_1000131346" description="Phosphatidylserine decarboxylase beta chain" evidence="1">
    <location>
        <begin position="1"/>
        <end position="225"/>
    </location>
</feature>
<feature type="chain" id="PRO_1000131347" description="Phosphatidylserine decarboxylase alpha chain" evidence="1">
    <location>
        <begin position="226"/>
        <end position="262"/>
    </location>
</feature>
<feature type="active site" description="Charge relay system; for autoendoproteolytic cleavage activity" evidence="1">
    <location>
        <position position="86"/>
    </location>
</feature>
<feature type="active site" description="Charge relay system; for autoendoproteolytic cleavage activity" evidence="1">
    <location>
        <position position="142"/>
    </location>
</feature>
<feature type="active site" description="Charge relay system; for autoendoproteolytic cleavage activity" evidence="1">
    <location>
        <position position="226"/>
    </location>
</feature>
<feature type="active site" description="Schiff-base intermediate with substrate; via pyruvic acid; for decarboxylase activity" evidence="1">
    <location>
        <position position="226"/>
    </location>
</feature>
<feature type="site" description="Cleavage (non-hydrolytic); by autocatalysis" evidence="1">
    <location>
        <begin position="225"/>
        <end position="226"/>
    </location>
</feature>
<feature type="modified residue" description="Pyruvic acid (Ser); by autocatalysis" evidence="1">
    <location>
        <position position="226"/>
    </location>
</feature>
<organism>
    <name type="scientific">Bacillus cereus (strain AH187)</name>
    <dbReference type="NCBI Taxonomy" id="405534"/>
    <lineage>
        <taxon>Bacteria</taxon>
        <taxon>Bacillati</taxon>
        <taxon>Bacillota</taxon>
        <taxon>Bacilli</taxon>
        <taxon>Bacillales</taxon>
        <taxon>Bacillaceae</taxon>
        <taxon>Bacillus</taxon>
        <taxon>Bacillus cereus group</taxon>
    </lineage>
</organism>
<comment type="function">
    <text evidence="1">Catalyzes the formation of phosphatidylethanolamine (PtdEtn) from phosphatidylserine (PtdSer).</text>
</comment>
<comment type="catalytic activity">
    <reaction evidence="1">
        <text>a 1,2-diacyl-sn-glycero-3-phospho-L-serine + H(+) = a 1,2-diacyl-sn-glycero-3-phosphoethanolamine + CO2</text>
        <dbReference type="Rhea" id="RHEA:20828"/>
        <dbReference type="ChEBI" id="CHEBI:15378"/>
        <dbReference type="ChEBI" id="CHEBI:16526"/>
        <dbReference type="ChEBI" id="CHEBI:57262"/>
        <dbReference type="ChEBI" id="CHEBI:64612"/>
        <dbReference type="EC" id="4.1.1.65"/>
    </reaction>
</comment>
<comment type="cofactor">
    <cofactor evidence="1">
        <name>pyruvate</name>
        <dbReference type="ChEBI" id="CHEBI:15361"/>
    </cofactor>
    <text evidence="1">Binds 1 pyruvoyl group covalently per subunit.</text>
</comment>
<comment type="pathway">
    <text evidence="1">Phospholipid metabolism; phosphatidylethanolamine biosynthesis; phosphatidylethanolamine from CDP-diacylglycerol: step 2/2.</text>
</comment>
<comment type="subunit">
    <text evidence="1">Heterodimer of a large membrane-associated beta subunit and a small pyruvoyl-containing alpha subunit.</text>
</comment>
<comment type="subcellular location">
    <subcellularLocation>
        <location evidence="1">Cell membrane</location>
        <topology evidence="1">Peripheral membrane protein</topology>
    </subcellularLocation>
</comment>
<comment type="PTM">
    <text evidence="1">Is synthesized initially as an inactive proenzyme. Formation of the active enzyme involves a self-maturation process in which the active site pyruvoyl group is generated from an internal serine residue via an autocatalytic post-translational modification. Two non-identical subunits are generated from the proenzyme in this reaction, and the pyruvate is formed at the N-terminus of the alpha chain, which is derived from the carboxyl end of the proenzyme. The autoendoproteolytic cleavage occurs by a canonical serine protease mechanism, in which the side chain hydroxyl group of the serine supplies its oxygen atom to form the C-terminus of the beta chain, while the remainder of the serine residue undergoes an oxidative deamination to produce ammonia and the pyruvoyl prosthetic group on the alpha chain. During this reaction, the Ser that is part of the protease active site of the proenzyme becomes the pyruvoyl prosthetic group, which constitutes an essential element of the active site of the mature decarboxylase.</text>
</comment>
<comment type="similarity">
    <text evidence="1">Belongs to the phosphatidylserine decarboxylase family. PSD-B subfamily. Prokaryotic type I sub-subfamily.</text>
</comment>
<reference key="1">
    <citation type="submission" date="2008-10" db="EMBL/GenBank/DDBJ databases">
        <title>Genome sequence of Bacillus cereus AH187.</title>
        <authorList>
            <person name="Dodson R.J."/>
            <person name="Durkin A.S."/>
            <person name="Rosovitz M.J."/>
            <person name="Rasko D.A."/>
            <person name="Kolsto A.B."/>
            <person name="Okstad O.A."/>
            <person name="Ravel J."/>
            <person name="Sutton G."/>
        </authorList>
    </citation>
    <scope>NUCLEOTIDE SEQUENCE [LARGE SCALE GENOMIC DNA]</scope>
    <source>
        <strain>AH187</strain>
    </source>
</reference>
<sequence>MRRTLYRLMIELTNGRFTSYILRKFAQSRLSSIIIPSYAKVFQINQDEMEKGLKEYRTLHELFTRKLKEGKRSIDTDASSIVSPVDGVFADHGPIEDTKTFDIKGKRYSIVDMLGNEERAQRYAGGTYMVIYLSPSHYHRIHSPLSGSVTERFVLGRKSYPVNAAGMEYGKEPLSKNYRSVTEVNSDGEHMALVKVGAMFVNSIELLHERDTVQKGEEMAYFTFGSTVVLLFEKDMIEVVQELKSGQELRLGEKIATRLAHK</sequence>
<evidence type="ECO:0000255" key="1">
    <source>
        <dbReference type="HAMAP-Rule" id="MF_00662"/>
    </source>
</evidence>
<protein>
    <recommendedName>
        <fullName evidence="1">Phosphatidylserine decarboxylase proenzyme</fullName>
        <ecNumber evidence="1">4.1.1.65</ecNumber>
    </recommendedName>
    <component>
        <recommendedName>
            <fullName evidence="1">Phosphatidylserine decarboxylase alpha chain</fullName>
        </recommendedName>
    </component>
    <component>
        <recommendedName>
            <fullName evidence="1">Phosphatidylserine decarboxylase beta chain</fullName>
        </recommendedName>
    </component>
</protein>